<comment type="function">
    <text evidence="1">Required for replicative DNA synthesis. This DNA polymerase also exhibits 3' to 5' exonuclease activity.</text>
</comment>
<comment type="catalytic activity">
    <reaction evidence="1">
        <text>DNA(n) + a 2'-deoxyribonucleoside 5'-triphosphate = DNA(n+1) + diphosphate</text>
        <dbReference type="Rhea" id="RHEA:22508"/>
        <dbReference type="Rhea" id="RHEA-COMP:17339"/>
        <dbReference type="Rhea" id="RHEA-COMP:17340"/>
        <dbReference type="ChEBI" id="CHEBI:33019"/>
        <dbReference type="ChEBI" id="CHEBI:61560"/>
        <dbReference type="ChEBI" id="CHEBI:173112"/>
        <dbReference type="EC" id="2.7.7.7"/>
    </reaction>
</comment>
<comment type="subcellular location">
    <subcellularLocation>
        <location evidence="1">Cytoplasm</location>
    </subcellularLocation>
</comment>
<comment type="similarity">
    <text evidence="1">Belongs to the DNA polymerase type-C family. PolC subfamily.</text>
</comment>
<gene>
    <name evidence="1" type="primary">polC</name>
    <name type="ordered locus">Tpet_0342</name>
</gene>
<dbReference type="EC" id="2.7.7.7" evidence="1"/>
<dbReference type="EMBL" id="CP000702">
    <property type="protein sequence ID" value="ABQ46371.1"/>
    <property type="molecule type" value="Genomic_DNA"/>
</dbReference>
<dbReference type="RefSeq" id="WP_011943006.1">
    <property type="nucleotide sequence ID" value="NC_009486.1"/>
</dbReference>
<dbReference type="SMR" id="A5IJJ8"/>
<dbReference type="STRING" id="390874.Tpet_0342"/>
<dbReference type="KEGG" id="tpt:Tpet_0342"/>
<dbReference type="eggNOG" id="COG2176">
    <property type="taxonomic scope" value="Bacteria"/>
</dbReference>
<dbReference type="HOGENOM" id="CLU_003297_2_0_0"/>
<dbReference type="Proteomes" id="UP000006558">
    <property type="component" value="Chromosome"/>
</dbReference>
<dbReference type="GO" id="GO:0005737">
    <property type="term" value="C:cytoplasm"/>
    <property type="evidence" value="ECO:0007669"/>
    <property type="project" value="UniProtKB-SubCell"/>
</dbReference>
<dbReference type="GO" id="GO:0008408">
    <property type="term" value="F:3'-5' exonuclease activity"/>
    <property type="evidence" value="ECO:0007669"/>
    <property type="project" value="UniProtKB-UniRule"/>
</dbReference>
<dbReference type="GO" id="GO:0003677">
    <property type="term" value="F:DNA binding"/>
    <property type="evidence" value="ECO:0007669"/>
    <property type="project" value="UniProtKB-UniRule"/>
</dbReference>
<dbReference type="GO" id="GO:0003887">
    <property type="term" value="F:DNA-directed DNA polymerase activity"/>
    <property type="evidence" value="ECO:0007669"/>
    <property type="project" value="UniProtKB-UniRule"/>
</dbReference>
<dbReference type="GO" id="GO:0006261">
    <property type="term" value="P:DNA-templated DNA replication"/>
    <property type="evidence" value="ECO:0007669"/>
    <property type="project" value="UniProtKB-UniRule"/>
</dbReference>
<dbReference type="CDD" id="cd06127">
    <property type="entry name" value="DEDDh"/>
    <property type="match status" value="1"/>
</dbReference>
<dbReference type="CDD" id="cd07435">
    <property type="entry name" value="PHP_PolIIIA_POLC"/>
    <property type="match status" value="1"/>
</dbReference>
<dbReference type="CDD" id="cd04484">
    <property type="entry name" value="polC_OBF"/>
    <property type="match status" value="1"/>
</dbReference>
<dbReference type="FunFam" id="3.30.420.10:FF:000045">
    <property type="entry name" value="3'-5' exonuclease DinG"/>
    <property type="match status" value="1"/>
</dbReference>
<dbReference type="Gene3D" id="1.10.150.870">
    <property type="match status" value="1"/>
</dbReference>
<dbReference type="Gene3D" id="3.30.1900.20">
    <property type="match status" value="2"/>
</dbReference>
<dbReference type="Gene3D" id="3.20.20.140">
    <property type="entry name" value="Metal-dependent hydrolases"/>
    <property type="match status" value="2"/>
</dbReference>
<dbReference type="Gene3D" id="2.40.50.140">
    <property type="entry name" value="Nucleic acid-binding proteins"/>
    <property type="match status" value="1"/>
</dbReference>
<dbReference type="Gene3D" id="1.10.150.700">
    <property type="entry name" value="PolC, middle finger domain"/>
    <property type="match status" value="2"/>
</dbReference>
<dbReference type="Gene3D" id="3.30.420.10">
    <property type="entry name" value="Ribonuclease H-like superfamily/Ribonuclease H"/>
    <property type="match status" value="1"/>
</dbReference>
<dbReference type="HAMAP" id="MF_00356">
    <property type="entry name" value="DNApol_PolC"/>
    <property type="match status" value="1"/>
</dbReference>
<dbReference type="InterPro" id="IPR011708">
    <property type="entry name" value="DNA_pol3_alpha_NTPase_dom"/>
</dbReference>
<dbReference type="InterPro" id="IPR040982">
    <property type="entry name" value="DNA_pol3_finger"/>
</dbReference>
<dbReference type="InterPro" id="IPR004805">
    <property type="entry name" value="DnaE2/DnaE/PolC"/>
</dbReference>
<dbReference type="InterPro" id="IPR029460">
    <property type="entry name" value="DNAPol_HHH"/>
</dbReference>
<dbReference type="InterPro" id="IPR006054">
    <property type="entry name" value="DnaQ"/>
</dbReference>
<dbReference type="InterPro" id="IPR013520">
    <property type="entry name" value="Exonuclease_RNaseT/DNA_pol3"/>
</dbReference>
<dbReference type="InterPro" id="IPR012340">
    <property type="entry name" value="NA-bd_OB-fold"/>
</dbReference>
<dbReference type="InterPro" id="IPR004365">
    <property type="entry name" value="NA-bd_OB_tRNA"/>
</dbReference>
<dbReference type="InterPro" id="IPR004013">
    <property type="entry name" value="PHP_dom"/>
</dbReference>
<dbReference type="InterPro" id="IPR003141">
    <property type="entry name" value="Pol/His_phosphatase_N"/>
</dbReference>
<dbReference type="InterPro" id="IPR006308">
    <property type="entry name" value="Pol_III_a_PolC-type_gram_pos"/>
</dbReference>
<dbReference type="InterPro" id="IPR044923">
    <property type="entry name" value="PolC_middle_finger_sf"/>
</dbReference>
<dbReference type="InterPro" id="IPR012337">
    <property type="entry name" value="RNaseH-like_sf"/>
</dbReference>
<dbReference type="InterPro" id="IPR036397">
    <property type="entry name" value="RNaseH_sf"/>
</dbReference>
<dbReference type="NCBIfam" id="TIGR00573">
    <property type="entry name" value="dnaq"/>
    <property type="match status" value="1"/>
</dbReference>
<dbReference type="NCBIfam" id="TIGR01405">
    <property type="entry name" value="polC_Gram_pos"/>
    <property type="match status" value="1"/>
</dbReference>
<dbReference type="NCBIfam" id="NF001688">
    <property type="entry name" value="PRK00448.1"/>
    <property type="match status" value="1"/>
</dbReference>
<dbReference type="PANTHER" id="PTHR32294:SF5">
    <property type="entry name" value="DNA POLYMERASE III POLC-TYPE"/>
    <property type="match status" value="1"/>
</dbReference>
<dbReference type="PANTHER" id="PTHR32294">
    <property type="entry name" value="DNA POLYMERASE III SUBUNIT ALPHA"/>
    <property type="match status" value="1"/>
</dbReference>
<dbReference type="Pfam" id="PF07733">
    <property type="entry name" value="DNA_pol3_alpha"/>
    <property type="match status" value="1"/>
</dbReference>
<dbReference type="Pfam" id="PF17657">
    <property type="entry name" value="DNA_pol3_finger"/>
    <property type="match status" value="1"/>
</dbReference>
<dbReference type="Pfam" id="PF14579">
    <property type="entry name" value="HHH_6"/>
    <property type="match status" value="1"/>
</dbReference>
<dbReference type="Pfam" id="PF02811">
    <property type="entry name" value="PHP"/>
    <property type="match status" value="1"/>
</dbReference>
<dbReference type="Pfam" id="PF00929">
    <property type="entry name" value="RNase_T"/>
    <property type="match status" value="1"/>
</dbReference>
<dbReference type="Pfam" id="PF01336">
    <property type="entry name" value="tRNA_anti-codon"/>
    <property type="match status" value="1"/>
</dbReference>
<dbReference type="SMART" id="SM00479">
    <property type="entry name" value="EXOIII"/>
    <property type="match status" value="1"/>
</dbReference>
<dbReference type="SMART" id="SM00481">
    <property type="entry name" value="POLIIIAc"/>
    <property type="match status" value="1"/>
</dbReference>
<dbReference type="SUPFAM" id="SSF160975">
    <property type="entry name" value="AF1531-like"/>
    <property type="match status" value="1"/>
</dbReference>
<dbReference type="SUPFAM" id="SSF53098">
    <property type="entry name" value="Ribonuclease H-like"/>
    <property type="match status" value="1"/>
</dbReference>
<accession>A5IJJ8</accession>
<protein>
    <recommendedName>
        <fullName evidence="1">DNA polymerase III PolC-type</fullName>
        <shortName evidence="1">PolIII</shortName>
        <ecNumber evidence="1">2.7.7.7</ecNumber>
    </recommendedName>
</protein>
<organism>
    <name type="scientific">Thermotoga petrophila (strain ATCC BAA-488 / DSM 13995 / JCM 10881 / RKU-1)</name>
    <dbReference type="NCBI Taxonomy" id="390874"/>
    <lineage>
        <taxon>Bacteria</taxon>
        <taxon>Thermotogati</taxon>
        <taxon>Thermotogota</taxon>
        <taxon>Thermotogae</taxon>
        <taxon>Thermotogales</taxon>
        <taxon>Thermotogaceae</taxon>
        <taxon>Thermotoga</taxon>
    </lineage>
</organism>
<name>DPO3_THEP1</name>
<proteinExistence type="inferred from homology"/>
<evidence type="ECO:0000255" key="1">
    <source>
        <dbReference type="HAMAP-Rule" id="MF_00356"/>
    </source>
</evidence>
<feature type="chain" id="PRO_1000048496" description="DNA polymerase III PolC-type">
    <location>
        <begin position="1"/>
        <end position="1367"/>
    </location>
</feature>
<feature type="domain" description="Exonuclease">
    <location>
        <begin position="358"/>
        <end position="513"/>
    </location>
</feature>
<sequence length="1367" mass="155335">MEKIENLKWKDVTFESIEIDPDAGVVLVSVEKFSSEVENLVSLLEKETRFRVIVNGAQKSNGDLKGKILSLLNGNVPYIKDVVFEGNRLILKVLGDFARDRIASKLRSTKKQLDELLPPGTEIMFEVVEPPEDLLKKEVPQPEKREEPKGEELKIEDENHIFGQKPRKIVFTPSKIFEYNKKTSVKGKVFKIEKIEGKKTVLLIYLTDGEDSLICKVFNDVEKVEGKISLGDVIVATGDLLLENGEPTLYVKGITKLPEAKRMDNSPVKRVELHAHTKFSDQDAITDVNEYVKRAKEWGFPAVALTDHGNVQAIPYFYDAAKEAGIKPIFGIEAYLVSDVEPVIRNLSYDSSFENATFVVLDFETTGLDPQVDEIIEIGAVKIQDGQIVDEYHTLIKPSREISRRSSEITGITQEMLENKRSIEEVLPEFLGFLENSIIVAHNANFDYRFLRLWIKKVMGLDWERPYIDTLALAKSLLKMRSYSLDSVVEKLGLGPFRHHRALDDARVTAQVFLRFVEMMKKIGITKLSEIENLKDTIDYTALKPFHCTILVQNKKGLKNLYKLVSDSYIKYFYGVPRILKSALIENREGLLVGSACISGELGRAALEGASDSELEEIAKFYDYIEVMPLDVIAEDEEDLDRERLKEVYRRLYRIAKKLNKFVVMTGDVHFLDPEDARGRAALLAPQGNRNFENQPALYLRTTEEMLEKAMEIFEDEEIAREVVIENPNRIADMIEEVQPLEKKLHPPIIENADEIVRSLTMKRAYEIYGDPLPEIVQKRVERELNAIINHGYAVLYLIAQELVQKSMSDGYVVGSRGSVGSSLVANLLGITEVNPLPPHYRCPECKYFKVVEDDRYGAGYDLPDKKCPVCGAPLRKDGHDIPFETFMGFEGDKVPDIDLNFSGEYQERAHRFVEELFGKDHVYRAGTINTIAEKSAVGYVRSYEEKTGKKLRKAEMERLVSMITGVKRTTGQHPGGLMIIPKDKEVYDFTPIQYPANDRNAGVFTTHFAYETIHDDLVKIDALGHDDPTFIKMLKDLTGIDPMTIPMDDPDTLAIFSSVKPLGVDPVELESDVGTYGIPEFGTEFVRGMLVETRPKSFAELVRISGLSHGTDVWLNNARDWINLGYAKLSDVISCRDDIMNFLIHKGMEPSLAFKIMENVRKGKGITEEMESEMRKLKVPEWFIESCKRIKYLFPKAHAVAYVSMAFRIAYFKVHYPLQFYAAYFTIKGDQFDPVLVLKGKEAIKRRLRELKAMTGKDVQKKNEESVLEVVLEMILRGFSFLPPDIFKSDAKKFLIEGNSLRIPFNKLPGLGDSVAESIVRAREEKPFTSVEDLMKRTKVNKNHIELMRSLGVLGSLPETEQFTLF</sequence>
<reference key="1">
    <citation type="submission" date="2007-05" db="EMBL/GenBank/DDBJ databases">
        <title>Complete sequence of Thermotoga petrophila RKU-1.</title>
        <authorList>
            <consortium name="US DOE Joint Genome Institute"/>
            <person name="Copeland A."/>
            <person name="Lucas S."/>
            <person name="Lapidus A."/>
            <person name="Barry K."/>
            <person name="Glavina del Rio T."/>
            <person name="Dalin E."/>
            <person name="Tice H."/>
            <person name="Pitluck S."/>
            <person name="Sims D."/>
            <person name="Brettin T."/>
            <person name="Bruce D."/>
            <person name="Detter J.C."/>
            <person name="Han C."/>
            <person name="Tapia R."/>
            <person name="Schmutz J."/>
            <person name="Larimer F."/>
            <person name="Land M."/>
            <person name="Hauser L."/>
            <person name="Kyrpides N."/>
            <person name="Mikhailova N."/>
            <person name="Nelson K."/>
            <person name="Gogarten J.P."/>
            <person name="Noll K."/>
            <person name="Richardson P."/>
        </authorList>
    </citation>
    <scope>NUCLEOTIDE SEQUENCE [LARGE SCALE GENOMIC DNA]</scope>
    <source>
        <strain>ATCC BAA-488 / DSM 13995 / JCM 10881 / RKU-1</strain>
    </source>
</reference>
<keyword id="KW-0963">Cytoplasm</keyword>
<keyword id="KW-0235">DNA replication</keyword>
<keyword id="KW-0239">DNA-directed DNA polymerase</keyword>
<keyword id="KW-0269">Exonuclease</keyword>
<keyword id="KW-0378">Hydrolase</keyword>
<keyword id="KW-0540">Nuclease</keyword>
<keyword id="KW-0548">Nucleotidyltransferase</keyword>
<keyword id="KW-0808">Transferase</keyword>